<reference key="1">
    <citation type="journal article" date="1998" name="Nature">
        <title>The genome sequence of Rickettsia prowazekii and the origin of mitochondria.</title>
        <authorList>
            <person name="Andersson S.G.E."/>
            <person name="Zomorodipour A."/>
            <person name="Andersson J.O."/>
            <person name="Sicheritz-Ponten T."/>
            <person name="Alsmark U.C.M."/>
            <person name="Podowski R.M."/>
            <person name="Naeslund A.K."/>
            <person name="Eriksson A.-S."/>
            <person name="Winkler H.H."/>
            <person name="Kurland C.G."/>
        </authorList>
    </citation>
    <scope>NUCLEOTIDE SEQUENCE [LARGE SCALE GENOMIC DNA]</scope>
    <source>
        <strain>Madrid E</strain>
    </source>
</reference>
<gene>
    <name evidence="1" type="primary">rplE</name>
    <name type="ordered locus">RP647</name>
</gene>
<comment type="function">
    <text evidence="1">This is one of the proteins that bind and probably mediate the attachment of the 5S RNA into the large ribosomal subunit, where it forms part of the central protuberance. In the 70S ribosome it contacts protein S13 of the 30S subunit (bridge B1b), connecting the 2 subunits; this bridge is implicated in subunit movement. Contacts the P site tRNA; the 5S rRNA and some of its associated proteins might help stabilize positioning of ribosome-bound tRNAs.</text>
</comment>
<comment type="subunit">
    <text evidence="1">Part of the 50S ribosomal subunit; part of the 5S rRNA/L5/L18/L25 subcomplex. Contacts the 5S rRNA and the P site tRNA. Forms a bridge to the 30S subunit in the 70S ribosome.</text>
</comment>
<comment type="similarity">
    <text evidence="1">Belongs to the universal ribosomal protein uL5 family.</text>
</comment>
<name>RL5_RICPR</name>
<protein>
    <recommendedName>
        <fullName evidence="1">Large ribosomal subunit protein uL5</fullName>
    </recommendedName>
    <alternativeName>
        <fullName evidence="2">50S ribosomal protein L5</fullName>
    </alternativeName>
</protein>
<proteinExistence type="inferred from homology"/>
<keyword id="KW-1185">Reference proteome</keyword>
<keyword id="KW-0687">Ribonucleoprotein</keyword>
<keyword id="KW-0689">Ribosomal protein</keyword>
<keyword id="KW-0694">RNA-binding</keyword>
<keyword id="KW-0699">rRNA-binding</keyword>
<keyword id="KW-0820">tRNA-binding</keyword>
<dbReference type="EMBL" id="AJ235272">
    <property type="protein sequence ID" value="CAA15087.1"/>
    <property type="molecule type" value="Genomic_DNA"/>
</dbReference>
<dbReference type="PIR" id="E71670">
    <property type="entry name" value="E71670"/>
</dbReference>
<dbReference type="RefSeq" id="NP_221011.1">
    <property type="nucleotide sequence ID" value="NC_000963.1"/>
</dbReference>
<dbReference type="RefSeq" id="WP_004599192.1">
    <property type="nucleotide sequence ID" value="NC_000963.1"/>
</dbReference>
<dbReference type="SMR" id="Q9ZCR7"/>
<dbReference type="STRING" id="272947.gene:17555724"/>
<dbReference type="EnsemblBacteria" id="CAA15087">
    <property type="protein sequence ID" value="CAA15087"/>
    <property type="gene ID" value="CAA15087"/>
</dbReference>
<dbReference type="GeneID" id="57569772"/>
<dbReference type="KEGG" id="rpr:RP647"/>
<dbReference type="PATRIC" id="fig|272947.5.peg.669"/>
<dbReference type="eggNOG" id="COG0094">
    <property type="taxonomic scope" value="Bacteria"/>
</dbReference>
<dbReference type="HOGENOM" id="CLU_061015_2_1_5"/>
<dbReference type="OrthoDB" id="9806626at2"/>
<dbReference type="Proteomes" id="UP000002480">
    <property type="component" value="Chromosome"/>
</dbReference>
<dbReference type="GO" id="GO:1990904">
    <property type="term" value="C:ribonucleoprotein complex"/>
    <property type="evidence" value="ECO:0007669"/>
    <property type="project" value="UniProtKB-KW"/>
</dbReference>
<dbReference type="GO" id="GO:0005840">
    <property type="term" value="C:ribosome"/>
    <property type="evidence" value="ECO:0007669"/>
    <property type="project" value="UniProtKB-KW"/>
</dbReference>
<dbReference type="GO" id="GO:0019843">
    <property type="term" value="F:rRNA binding"/>
    <property type="evidence" value="ECO:0007669"/>
    <property type="project" value="UniProtKB-UniRule"/>
</dbReference>
<dbReference type="GO" id="GO:0003735">
    <property type="term" value="F:structural constituent of ribosome"/>
    <property type="evidence" value="ECO:0007669"/>
    <property type="project" value="InterPro"/>
</dbReference>
<dbReference type="GO" id="GO:0000049">
    <property type="term" value="F:tRNA binding"/>
    <property type="evidence" value="ECO:0007669"/>
    <property type="project" value="UniProtKB-UniRule"/>
</dbReference>
<dbReference type="GO" id="GO:0006412">
    <property type="term" value="P:translation"/>
    <property type="evidence" value="ECO:0007669"/>
    <property type="project" value="UniProtKB-UniRule"/>
</dbReference>
<dbReference type="FunFam" id="3.30.1440.10:FF:000001">
    <property type="entry name" value="50S ribosomal protein L5"/>
    <property type="match status" value="1"/>
</dbReference>
<dbReference type="Gene3D" id="3.30.1440.10">
    <property type="match status" value="1"/>
</dbReference>
<dbReference type="HAMAP" id="MF_01333_B">
    <property type="entry name" value="Ribosomal_uL5_B"/>
    <property type="match status" value="1"/>
</dbReference>
<dbReference type="InterPro" id="IPR002132">
    <property type="entry name" value="Ribosomal_uL5"/>
</dbReference>
<dbReference type="InterPro" id="IPR020930">
    <property type="entry name" value="Ribosomal_uL5_bac-type"/>
</dbReference>
<dbReference type="InterPro" id="IPR031309">
    <property type="entry name" value="Ribosomal_uL5_C"/>
</dbReference>
<dbReference type="InterPro" id="IPR020929">
    <property type="entry name" value="Ribosomal_uL5_CS"/>
</dbReference>
<dbReference type="InterPro" id="IPR022803">
    <property type="entry name" value="Ribosomal_uL5_dom_sf"/>
</dbReference>
<dbReference type="InterPro" id="IPR031310">
    <property type="entry name" value="Ribosomal_uL5_N"/>
</dbReference>
<dbReference type="NCBIfam" id="NF000585">
    <property type="entry name" value="PRK00010.1"/>
    <property type="match status" value="1"/>
</dbReference>
<dbReference type="PANTHER" id="PTHR11994">
    <property type="entry name" value="60S RIBOSOMAL PROTEIN L11-RELATED"/>
    <property type="match status" value="1"/>
</dbReference>
<dbReference type="Pfam" id="PF00281">
    <property type="entry name" value="Ribosomal_L5"/>
    <property type="match status" value="1"/>
</dbReference>
<dbReference type="Pfam" id="PF00673">
    <property type="entry name" value="Ribosomal_L5_C"/>
    <property type="match status" value="1"/>
</dbReference>
<dbReference type="PIRSF" id="PIRSF002161">
    <property type="entry name" value="Ribosomal_L5"/>
    <property type="match status" value="1"/>
</dbReference>
<dbReference type="SUPFAM" id="SSF55282">
    <property type="entry name" value="RL5-like"/>
    <property type="match status" value="1"/>
</dbReference>
<dbReference type="PROSITE" id="PS00358">
    <property type="entry name" value="RIBOSOMAL_L5"/>
    <property type="match status" value="1"/>
</dbReference>
<evidence type="ECO:0000255" key="1">
    <source>
        <dbReference type="HAMAP-Rule" id="MF_01333"/>
    </source>
</evidence>
<evidence type="ECO:0000305" key="2"/>
<sequence>MLRFKELYKQKIIESLKKEFSFKNKHEIPKIKKIVINMGVGEAIADSKVINNALNDLTLISGQKPVVTLARKSIATFKLRENMKIGCKVTLRKDRMYDFLERLVIVALPRVKEFRGFSYKSFDGKGNFTFGLKEQIVFPEINYDKIDTIRGMDITIVTSAKTDQESKFLLSGFNLPFYN</sequence>
<organism>
    <name type="scientific">Rickettsia prowazekii (strain Madrid E)</name>
    <dbReference type="NCBI Taxonomy" id="272947"/>
    <lineage>
        <taxon>Bacteria</taxon>
        <taxon>Pseudomonadati</taxon>
        <taxon>Pseudomonadota</taxon>
        <taxon>Alphaproteobacteria</taxon>
        <taxon>Rickettsiales</taxon>
        <taxon>Rickettsiaceae</taxon>
        <taxon>Rickettsieae</taxon>
        <taxon>Rickettsia</taxon>
        <taxon>typhus group</taxon>
    </lineage>
</organism>
<accession>Q9ZCR7</accession>
<feature type="chain" id="PRO_0000124979" description="Large ribosomal subunit protein uL5">
    <location>
        <begin position="1"/>
        <end position="179"/>
    </location>
</feature>